<sequence>MPVLHNRISNDALKAKMLAESEPRTTISFYKYFHIADPKATRDALYQLFTALNVFGRVYLAHEGINAQISVPASNVETFRAQLYAFDSALDGLRLNIALDDDGKSFWVLRMKVRDRIVADGIDDPHFDASNVGEYLQAAEVNAMLDDPDALFIDMRNHYEYEVGHFENALEIPADTFREQLPKAVEMMQAHKDKKIVMYCTGGIRCEKASAWMKHNGFNKVWHIEGGIIEYARKAREQGLPVRFIGKNFVFDERMGERISDEIIAHCHQCGAPCDSHTNCKNDGCHLLFIQCPVCAEKYKGCCSEICCEESALPPEEQRRRRAGRENGNKIFNKSRGRLNTTLGIPDPTE</sequence>
<proteinExistence type="inferred from homology"/>
<keyword id="KW-0560">Oxidoreductase</keyword>
<keyword id="KW-0819">tRNA processing</keyword>
<organism>
    <name type="scientific">Escherichia coli O9:H4 (strain HS)</name>
    <dbReference type="NCBI Taxonomy" id="331112"/>
    <lineage>
        <taxon>Bacteria</taxon>
        <taxon>Pseudomonadati</taxon>
        <taxon>Pseudomonadota</taxon>
        <taxon>Gammaproteobacteria</taxon>
        <taxon>Enterobacterales</taxon>
        <taxon>Enterobacteriaceae</taxon>
        <taxon>Escherichia</taxon>
    </lineage>
</organism>
<reference key="1">
    <citation type="journal article" date="2008" name="J. Bacteriol.">
        <title>The pangenome structure of Escherichia coli: comparative genomic analysis of E. coli commensal and pathogenic isolates.</title>
        <authorList>
            <person name="Rasko D.A."/>
            <person name="Rosovitz M.J."/>
            <person name="Myers G.S.A."/>
            <person name="Mongodin E.F."/>
            <person name="Fricke W.F."/>
            <person name="Gajer P."/>
            <person name="Crabtree J."/>
            <person name="Sebaihia M."/>
            <person name="Thomson N.R."/>
            <person name="Chaudhuri R."/>
            <person name="Henderson I.R."/>
            <person name="Sperandio V."/>
            <person name="Ravel J."/>
        </authorList>
    </citation>
    <scope>NUCLEOTIDE SEQUENCE [LARGE SCALE GENOMIC DNA]</scope>
    <source>
        <strain>HS</strain>
    </source>
</reference>
<gene>
    <name evidence="2" type="primary">trhO</name>
    <name type="synonym">yceA</name>
    <name type="ordered locus">EcHS_A1178</name>
</gene>
<dbReference type="EC" id="1.14.-.-" evidence="2"/>
<dbReference type="EMBL" id="CP000802">
    <property type="protein sequence ID" value="ABV05517.1"/>
    <property type="molecule type" value="Genomic_DNA"/>
</dbReference>
<dbReference type="RefSeq" id="WP_001295444.1">
    <property type="nucleotide sequence ID" value="NC_009800.1"/>
</dbReference>
<dbReference type="SMR" id="A7ZZ13"/>
<dbReference type="KEGG" id="ecx:EcHS_A1178"/>
<dbReference type="HOGENOM" id="CLU_038878_1_1_6"/>
<dbReference type="GO" id="GO:0016705">
    <property type="term" value="F:oxidoreductase activity, acting on paired donors, with incorporation or reduction of molecular oxygen"/>
    <property type="evidence" value="ECO:0007669"/>
    <property type="project" value="UniProtKB-UniRule"/>
</dbReference>
<dbReference type="GO" id="GO:0006400">
    <property type="term" value="P:tRNA modification"/>
    <property type="evidence" value="ECO:0007669"/>
    <property type="project" value="UniProtKB-UniRule"/>
</dbReference>
<dbReference type="CDD" id="cd01518">
    <property type="entry name" value="RHOD_YceA"/>
    <property type="match status" value="1"/>
</dbReference>
<dbReference type="Gene3D" id="3.30.70.100">
    <property type="match status" value="1"/>
</dbReference>
<dbReference type="Gene3D" id="3.40.250.10">
    <property type="entry name" value="Rhodanese-like domain"/>
    <property type="match status" value="1"/>
</dbReference>
<dbReference type="HAMAP" id="MF_00469">
    <property type="entry name" value="TrhO"/>
    <property type="match status" value="1"/>
</dbReference>
<dbReference type="InterPro" id="IPR001763">
    <property type="entry name" value="Rhodanese-like_dom"/>
</dbReference>
<dbReference type="InterPro" id="IPR036873">
    <property type="entry name" value="Rhodanese-like_dom_sf"/>
</dbReference>
<dbReference type="InterPro" id="IPR022111">
    <property type="entry name" value="Rhodanese_C"/>
</dbReference>
<dbReference type="InterPro" id="IPR020936">
    <property type="entry name" value="TrhO"/>
</dbReference>
<dbReference type="InterPro" id="IPR040503">
    <property type="entry name" value="TRHO_N"/>
</dbReference>
<dbReference type="NCBIfam" id="NF001133">
    <property type="entry name" value="PRK00142.1-1"/>
    <property type="match status" value="1"/>
</dbReference>
<dbReference type="PANTHER" id="PTHR43846:SF1">
    <property type="entry name" value="TRNA URIDINE(34) HYDROXYLASE"/>
    <property type="match status" value="1"/>
</dbReference>
<dbReference type="PANTHER" id="PTHR43846">
    <property type="entry name" value="UPF0176 PROTEIN YCEA"/>
    <property type="match status" value="1"/>
</dbReference>
<dbReference type="Pfam" id="PF00581">
    <property type="entry name" value="Rhodanese"/>
    <property type="match status" value="1"/>
</dbReference>
<dbReference type="Pfam" id="PF12368">
    <property type="entry name" value="Rhodanese_C"/>
    <property type="match status" value="1"/>
</dbReference>
<dbReference type="Pfam" id="PF17773">
    <property type="entry name" value="UPF0176_N"/>
    <property type="match status" value="1"/>
</dbReference>
<dbReference type="SMART" id="SM00450">
    <property type="entry name" value="RHOD"/>
    <property type="match status" value="1"/>
</dbReference>
<dbReference type="SUPFAM" id="SSF52821">
    <property type="entry name" value="Rhodanese/Cell cycle control phosphatase"/>
    <property type="match status" value="1"/>
</dbReference>
<dbReference type="PROSITE" id="PS50206">
    <property type="entry name" value="RHODANESE_3"/>
    <property type="match status" value="1"/>
</dbReference>
<protein>
    <recommendedName>
        <fullName evidence="2">tRNA uridine(34) hydroxylase</fullName>
        <ecNumber evidence="2">1.14.-.-</ecNumber>
    </recommendedName>
    <alternativeName>
        <fullName evidence="2">tRNA hydroxylation protein O</fullName>
    </alternativeName>
</protein>
<accession>A7ZZ13</accession>
<feature type="chain" id="PRO_1000060366" description="tRNA uridine(34) hydroxylase">
    <location>
        <begin position="1"/>
        <end position="350"/>
    </location>
</feature>
<feature type="domain" description="Rhodanese" evidence="2">
    <location>
        <begin position="146"/>
        <end position="240"/>
    </location>
</feature>
<feature type="active site" description="Cysteine persulfide intermediate" evidence="2">
    <location>
        <position position="200"/>
    </location>
</feature>
<evidence type="ECO:0000250" key="1">
    <source>
        <dbReference type="UniProtKB" id="P24188"/>
    </source>
</evidence>
<evidence type="ECO:0000255" key="2">
    <source>
        <dbReference type="HAMAP-Rule" id="MF_00469"/>
    </source>
</evidence>
<comment type="function">
    <text evidence="1">Catalyzes oxygen-dependent 5-hydroxyuridine (ho5U) modification at position 34 in tRNAs, the first step in 5-carboxymethoxyuridine (cmo5U) biosynthesis. May be part of an alternate pathway, which is able to bypass cmo5U biogenesis in a subset of tRNAs under aerobic conditions.</text>
</comment>
<comment type="catalytic activity">
    <reaction evidence="2">
        <text>uridine(34) in tRNA + AH2 + O2 = 5-hydroxyuridine(34) in tRNA + A + H2O</text>
        <dbReference type="Rhea" id="RHEA:64224"/>
        <dbReference type="Rhea" id="RHEA-COMP:11727"/>
        <dbReference type="Rhea" id="RHEA-COMP:13381"/>
        <dbReference type="ChEBI" id="CHEBI:13193"/>
        <dbReference type="ChEBI" id="CHEBI:15377"/>
        <dbReference type="ChEBI" id="CHEBI:15379"/>
        <dbReference type="ChEBI" id="CHEBI:17499"/>
        <dbReference type="ChEBI" id="CHEBI:65315"/>
        <dbReference type="ChEBI" id="CHEBI:136877"/>
    </reaction>
</comment>
<comment type="similarity">
    <text evidence="2">Belongs to the TrhO family.</text>
</comment>
<name>TRHO_ECOHS</name>